<comment type="function">
    <text evidence="1">Catalyzes the second step of the reductive pyrimidine degradation, the reversible hydrolytic ring opening of dihydropyrimidines. Can catalyze the ring opening of 5,6-dihydrouracil to N-carbamyl-alanine and of 5,6-dihydrothymine to N-carbamyl-amino isobutyrate (By similarity).</text>
</comment>
<comment type="catalytic activity">
    <reaction evidence="3">
        <text>5,6-dihydrouracil + H2O = 3-(carbamoylamino)propanoate + H(+)</text>
        <dbReference type="Rhea" id="RHEA:16121"/>
        <dbReference type="ChEBI" id="CHEBI:11892"/>
        <dbReference type="ChEBI" id="CHEBI:15377"/>
        <dbReference type="ChEBI" id="CHEBI:15378"/>
        <dbReference type="ChEBI" id="CHEBI:15901"/>
        <dbReference type="EC" id="3.5.2.2"/>
    </reaction>
</comment>
<comment type="cofactor">
    <cofactor evidence="3">
        <name>Zn(2+)</name>
        <dbReference type="ChEBI" id="CHEBI:29105"/>
    </cofactor>
    <text evidence="3">Binds 2 Zn(2+) ions per subunit.</text>
</comment>
<comment type="subunit">
    <text evidence="3">Homotetramer.</text>
</comment>
<comment type="PTM">
    <text evidence="1">Carboxylation allows a single lysine to coordinate two zinc ions.</text>
</comment>
<comment type="similarity">
    <text evidence="6">Belongs to the metallo-dependent hydrolases superfamily. Hydantoinase/dihydropyrimidinase family.</text>
</comment>
<feature type="chain" id="PRO_0000165907" description="Dihydropyrimidinase">
    <location>
        <begin position="1"/>
        <end position="519"/>
    </location>
</feature>
<feature type="binding site" evidence="5">
    <location>
        <position position="67"/>
    </location>
    <ligand>
        <name>Zn(2+)</name>
        <dbReference type="ChEBI" id="CHEBI:29105"/>
        <label>1</label>
    </ligand>
</feature>
<feature type="binding site" evidence="5">
    <location>
        <position position="69"/>
    </location>
    <ligand>
        <name>Zn(2+)</name>
        <dbReference type="ChEBI" id="CHEBI:29105"/>
        <label>1</label>
    </ligand>
</feature>
<feature type="binding site" description="via carbamate group" evidence="5">
    <location>
        <position position="159"/>
    </location>
    <ligand>
        <name>Zn(2+)</name>
        <dbReference type="ChEBI" id="CHEBI:29105"/>
        <label>1</label>
    </ligand>
</feature>
<feature type="binding site" description="via carbamate group" evidence="5">
    <location>
        <position position="159"/>
    </location>
    <ligand>
        <name>Zn(2+)</name>
        <dbReference type="ChEBI" id="CHEBI:29105"/>
        <label>2</label>
    </ligand>
</feature>
<feature type="binding site" evidence="5">
    <location>
        <position position="164"/>
    </location>
    <ligand>
        <name>substrate</name>
    </ligand>
</feature>
<feature type="binding site" evidence="5">
    <location>
        <position position="192"/>
    </location>
    <ligand>
        <name>Zn(2+)</name>
        <dbReference type="ChEBI" id="CHEBI:29105"/>
        <label>2</label>
    </ligand>
</feature>
<feature type="binding site" evidence="5">
    <location>
        <position position="248"/>
    </location>
    <ligand>
        <name>Zn(2+)</name>
        <dbReference type="ChEBI" id="CHEBI:29105"/>
        <label>2</label>
    </ligand>
</feature>
<feature type="binding site" evidence="5">
    <location>
        <position position="326"/>
    </location>
    <ligand>
        <name>Zn(2+)</name>
        <dbReference type="ChEBI" id="CHEBI:29105"/>
        <label>1</label>
    </ligand>
</feature>
<feature type="binding site" evidence="5">
    <location>
        <position position="347"/>
    </location>
    <ligand>
        <name>substrate</name>
    </ligand>
</feature>
<feature type="modified residue" description="Phosphoserine" evidence="2">
    <location>
        <position position="79"/>
    </location>
</feature>
<feature type="modified residue" description="N6-carboxylysine" evidence="5">
    <location>
        <position position="159"/>
    </location>
</feature>
<feature type="modified residue" description="N6-succinyllysine" evidence="7">
    <location>
        <position position="256"/>
    </location>
</feature>
<feature type="modified residue" description="Phosphothreonine" evidence="4">
    <location>
        <position position="510"/>
    </location>
</feature>
<feature type="sequence conflict" description="In Ref. 1; AAG37999 and 4; AAH37086." evidence="6" ref="1 4">
    <original>R</original>
    <variation>L</variation>
    <location>
        <position position="13"/>
    </location>
</feature>
<feature type="sequence conflict" description="In Ref. 2; AAK00644." evidence="6" ref="2">
    <original>R</original>
    <variation>P</variation>
    <location>
        <position position="37"/>
    </location>
</feature>
<feature type="sequence conflict" description="In Ref. 2; AAK00644." evidence="6" ref="2">
    <original>E</original>
    <variation>G</variation>
    <location>
        <position position="43"/>
    </location>
</feature>
<feature type="sequence conflict" description="In Ref. 3; BAB23654." evidence="6" ref="3">
    <original>M</original>
    <variation>T</variation>
    <location>
        <position position="206"/>
    </location>
</feature>
<feature type="sequence conflict" description="In Ref. 2; AAK00644." evidence="6" ref="2">
    <original>P</original>
    <variation>L</variation>
    <location>
        <position position="299"/>
    </location>
</feature>
<feature type="sequence conflict" description="In Ref. 2; AAK00644." evidence="6" ref="2">
    <original>S</original>
    <variation>N</variation>
    <location>
        <position position="366"/>
    </location>
</feature>
<proteinExistence type="evidence at protein level"/>
<evidence type="ECO:0000250" key="1"/>
<evidence type="ECO:0000250" key="2">
    <source>
        <dbReference type="UniProtKB" id="Q14117"/>
    </source>
</evidence>
<evidence type="ECO:0000250" key="3">
    <source>
        <dbReference type="UniProtKB" id="Q55DL0"/>
    </source>
</evidence>
<evidence type="ECO:0000250" key="4">
    <source>
        <dbReference type="UniProtKB" id="Q9EQF6"/>
    </source>
</evidence>
<evidence type="ECO:0000250" key="5">
    <source>
        <dbReference type="UniProtKB" id="Q9P903"/>
    </source>
</evidence>
<evidence type="ECO:0000305" key="6"/>
<evidence type="ECO:0007744" key="7">
    <source>
    </source>
</evidence>
<sequence length="519" mass="56725">MAPQGRLLIRGGRIVNDDFSQVADVLVEDGVVRALGRDLLPPEDASRGLRILDAAGKLVLPGGIDTHTHMQFPFMGSQSVDDFYQGTKAALAGGTTMIIDFAIPQKGSSLIEAFETWRNWADPKVCCDYSLHVAVTWWSDKVKEEMKTLARDKGVNSFKMFMAYKGLYMVQDEQLYAAFSQCKEIGAIAQVHAENGDLIAEGAKKMLALGITGPEGHELCRPEAVEAEATLRAITIASAVNCPLYVVHVMSKSAAKVVADARRAGNVVYGEPIAAGLGTDGRQYWSEEWSHAAHHVMGPPLRPDPLTPGFLMDLLANGDLTTTGSDNCTFNTCQKALGKDDFTKIPNGVNGVEDRMSVIWEKGVHSGKMDENRFVAVTSTNAAKIFNLYPKKGRIAVGSDADIVIWDPEATRRISAKTHHQAVNFNIFEGMVCHGVPLVTISRGRVVYEAGVFNVTAGHGKFIPRQPFAEYIYKRIKQRDQTCTPVPVKRAPYKGEVTTLKARETKEDDTAGTRMQGHS</sequence>
<accession>Q9EQF5</accession>
<accession>Q99PP1</accession>
<accession>Q9DBK3</accession>
<accession>Q9DBP7</accession>
<protein>
    <recommendedName>
        <fullName>Dihydropyrimidinase</fullName>
        <shortName>DHP</shortName>
        <shortName>DHPase</shortName>
        <ecNumber evidence="3">3.5.2.2</ecNumber>
    </recommendedName>
    <alternativeName>
        <fullName>Dihydropyrimidine amidohydrolase</fullName>
    </alternativeName>
    <alternativeName>
        <fullName>Hydantoinase</fullName>
    </alternativeName>
</protein>
<reference key="1">
    <citation type="journal article" date="2000" name="J. Biol. Chem.">
        <title>Molecular characterization of CRMP5, a novel member of the collapsin response mediator protein family.</title>
        <authorList>
            <person name="Fukada M."/>
            <person name="Watakabe I."/>
            <person name="Yuasa-Kawada J."/>
            <person name="Kawachi H."/>
            <person name="Kuroiwa A."/>
            <person name="Matsuda Y."/>
            <person name="Noda M."/>
        </authorList>
    </citation>
    <scope>NUCLEOTIDE SEQUENCE [MRNA]</scope>
    <source>
        <strain>Swiss Webster / NIH</strain>
        <tissue>Embryo</tissue>
    </source>
</reference>
<reference key="2">
    <citation type="submission" date="2000-01" db="EMBL/GenBank/DDBJ databases">
        <title>Molecular cloning, nucleotide sequencing, characterization and overexpression of dihydropyrimidinase from mouse liver.</title>
        <authorList>
            <person name="Chang C.J."/>
            <person name="Huang C.J."/>
            <person name="Yang Y.S."/>
            <person name="Wu T.K."/>
        </authorList>
    </citation>
    <scope>NUCLEOTIDE SEQUENCE [MRNA]</scope>
    <source>
        <tissue>Liver</tissue>
    </source>
</reference>
<reference key="3">
    <citation type="journal article" date="2005" name="Science">
        <title>The transcriptional landscape of the mammalian genome.</title>
        <authorList>
            <person name="Carninci P."/>
            <person name="Kasukawa T."/>
            <person name="Katayama S."/>
            <person name="Gough J."/>
            <person name="Frith M.C."/>
            <person name="Maeda N."/>
            <person name="Oyama R."/>
            <person name="Ravasi T."/>
            <person name="Lenhard B."/>
            <person name="Wells C."/>
            <person name="Kodzius R."/>
            <person name="Shimokawa K."/>
            <person name="Bajic V.B."/>
            <person name="Brenner S.E."/>
            <person name="Batalov S."/>
            <person name="Forrest A.R."/>
            <person name="Zavolan M."/>
            <person name="Davis M.J."/>
            <person name="Wilming L.G."/>
            <person name="Aidinis V."/>
            <person name="Allen J.E."/>
            <person name="Ambesi-Impiombato A."/>
            <person name="Apweiler R."/>
            <person name="Aturaliya R.N."/>
            <person name="Bailey T.L."/>
            <person name="Bansal M."/>
            <person name="Baxter L."/>
            <person name="Beisel K.W."/>
            <person name="Bersano T."/>
            <person name="Bono H."/>
            <person name="Chalk A.M."/>
            <person name="Chiu K.P."/>
            <person name="Choudhary V."/>
            <person name="Christoffels A."/>
            <person name="Clutterbuck D.R."/>
            <person name="Crowe M.L."/>
            <person name="Dalla E."/>
            <person name="Dalrymple B.P."/>
            <person name="de Bono B."/>
            <person name="Della Gatta G."/>
            <person name="di Bernardo D."/>
            <person name="Down T."/>
            <person name="Engstrom P."/>
            <person name="Fagiolini M."/>
            <person name="Faulkner G."/>
            <person name="Fletcher C.F."/>
            <person name="Fukushima T."/>
            <person name="Furuno M."/>
            <person name="Futaki S."/>
            <person name="Gariboldi M."/>
            <person name="Georgii-Hemming P."/>
            <person name="Gingeras T.R."/>
            <person name="Gojobori T."/>
            <person name="Green R.E."/>
            <person name="Gustincich S."/>
            <person name="Harbers M."/>
            <person name="Hayashi Y."/>
            <person name="Hensch T.K."/>
            <person name="Hirokawa N."/>
            <person name="Hill D."/>
            <person name="Huminiecki L."/>
            <person name="Iacono M."/>
            <person name="Ikeo K."/>
            <person name="Iwama A."/>
            <person name="Ishikawa T."/>
            <person name="Jakt M."/>
            <person name="Kanapin A."/>
            <person name="Katoh M."/>
            <person name="Kawasawa Y."/>
            <person name="Kelso J."/>
            <person name="Kitamura H."/>
            <person name="Kitano H."/>
            <person name="Kollias G."/>
            <person name="Krishnan S.P."/>
            <person name="Kruger A."/>
            <person name="Kummerfeld S.K."/>
            <person name="Kurochkin I.V."/>
            <person name="Lareau L.F."/>
            <person name="Lazarevic D."/>
            <person name="Lipovich L."/>
            <person name="Liu J."/>
            <person name="Liuni S."/>
            <person name="McWilliam S."/>
            <person name="Madan Babu M."/>
            <person name="Madera M."/>
            <person name="Marchionni L."/>
            <person name="Matsuda H."/>
            <person name="Matsuzawa S."/>
            <person name="Miki H."/>
            <person name="Mignone F."/>
            <person name="Miyake S."/>
            <person name="Morris K."/>
            <person name="Mottagui-Tabar S."/>
            <person name="Mulder N."/>
            <person name="Nakano N."/>
            <person name="Nakauchi H."/>
            <person name="Ng P."/>
            <person name="Nilsson R."/>
            <person name="Nishiguchi S."/>
            <person name="Nishikawa S."/>
            <person name="Nori F."/>
            <person name="Ohara O."/>
            <person name="Okazaki Y."/>
            <person name="Orlando V."/>
            <person name="Pang K.C."/>
            <person name="Pavan W.J."/>
            <person name="Pavesi G."/>
            <person name="Pesole G."/>
            <person name="Petrovsky N."/>
            <person name="Piazza S."/>
            <person name="Reed J."/>
            <person name="Reid J.F."/>
            <person name="Ring B.Z."/>
            <person name="Ringwald M."/>
            <person name="Rost B."/>
            <person name="Ruan Y."/>
            <person name="Salzberg S.L."/>
            <person name="Sandelin A."/>
            <person name="Schneider C."/>
            <person name="Schoenbach C."/>
            <person name="Sekiguchi K."/>
            <person name="Semple C.A."/>
            <person name="Seno S."/>
            <person name="Sessa L."/>
            <person name="Sheng Y."/>
            <person name="Shibata Y."/>
            <person name="Shimada H."/>
            <person name="Shimada K."/>
            <person name="Silva D."/>
            <person name="Sinclair B."/>
            <person name="Sperling S."/>
            <person name="Stupka E."/>
            <person name="Sugiura K."/>
            <person name="Sultana R."/>
            <person name="Takenaka Y."/>
            <person name="Taki K."/>
            <person name="Tammoja K."/>
            <person name="Tan S.L."/>
            <person name="Tang S."/>
            <person name="Taylor M.S."/>
            <person name="Tegner J."/>
            <person name="Teichmann S.A."/>
            <person name="Ueda H.R."/>
            <person name="van Nimwegen E."/>
            <person name="Verardo R."/>
            <person name="Wei C.L."/>
            <person name="Yagi K."/>
            <person name="Yamanishi H."/>
            <person name="Zabarovsky E."/>
            <person name="Zhu S."/>
            <person name="Zimmer A."/>
            <person name="Hide W."/>
            <person name="Bult C."/>
            <person name="Grimmond S.M."/>
            <person name="Teasdale R.D."/>
            <person name="Liu E.T."/>
            <person name="Brusic V."/>
            <person name="Quackenbush J."/>
            <person name="Wahlestedt C."/>
            <person name="Mattick J.S."/>
            <person name="Hume D.A."/>
            <person name="Kai C."/>
            <person name="Sasaki D."/>
            <person name="Tomaru Y."/>
            <person name="Fukuda S."/>
            <person name="Kanamori-Katayama M."/>
            <person name="Suzuki M."/>
            <person name="Aoki J."/>
            <person name="Arakawa T."/>
            <person name="Iida J."/>
            <person name="Imamura K."/>
            <person name="Itoh M."/>
            <person name="Kato T."/>
            <person name="Kawaji H."/>
            <person name="Kawagashira N."/>
            <person name="Kawashima T."/>
            <person name="Kojima M."/>
            <person name="Kondo S."/>
            <person name="Konno H."/>
            <person name="Nakano K."/>
            <person name="Ninomiya N."/>
            <person name="Nishio T."/>
            <person name="Okada M."/>
            <person name="Plessy C."/>
            <person name="Shibata K."/>
            <person name="Shiraki T."/>
            <person name="Suzuki S."/>
            <person name="Tagami M."/>
            <person name="Waki K."/>
            <person name="Watahiki A."/>
            <person name="Okamura-Oho Y."/>
            <person name="Suzuki H."/>
            <person name="Kawai J."/>
            <person name="Hayashizaki Y."/>
        </authorList>
    </citation>
    <scope>NUCLEOTIDE SEQUENCE [LARGE SCALE MRNA]</scope>
    <source>
        <strain>C57BL/6J</strain>
        <tissue>Liver</tissue>
        <tissue>Lung</tissue>
    </source>
</reference>
<reference key="4">
    <citation type="journal article" date="2004" name="Genome Res.">
        <title>The status, quality, and expansion of the NIH full-length cDNA project: the Mammalian Gene Collection (MGC).</title>
        <authorList>
            <consortium name="The MGC Project Team"/>
        </authorList>
    </citation>
    <scope>NUCLEOTIDE SEQUENCE [LARGE SCALE MRNA]</scope>
    <source>
        <strain>FVB/N</strain>
        <tissue>Liver</tissue>
    </source>
</reference>
<reference key="5">
    <citation type="journal article" date="2010" name="Cell">
        <title>A tissue-specific atlas of mouse protein phosphorylation and expression.</title>
        <authorList>
            <person name="Huttlin E.L."/>
            <person name="Jedrychowski M.P."/>
            <person name="Elias J.E."/>
            <person name="Goswami T."/>
            <person name="Rad R."/>
            <person name="Beausoleil S.A."/>
            <person name="Villen J."/>
            <person name="Haas W."/>
            <person name="Sowa M.E."/>
            <person name="Gygi S.P."/>
        </authorList>
    </citation>
    <scope>IDENTIFICATION BY MASS SPECTROMETRY [LARGE SCALE ANALYSIS]</scope>
    <source>
        <tissue>Liver</tissue>
    </source>
</reference>
<reference key="6">
    <citation type="journal article" date="2013" name="Mol. Cell">
        <title>SIRT5-mediated lysine desuccinylation impacts diverse metabolic pathways.</title>
        <authorList>
            <person name="Park J."/>
            <person name="Chen Y."/>
            <person name="Tishkoff D.X."/>
            <person name="Peng C."/>
            <person name="Tan M."/>
            <person name="Dai L."/>
            <person name="Xie Z."/>
            <person name="Zhang Y."/>
            <person name="Zwaans B.M."/>
            <person name="Skinner M.E."/>
            <person name="Lombard D.B."/>
            <person name="Zhao Y."/>
        </authorList>
    </citation>
    <scope>SUCCINYLATION [LARGE SCALE ANALYSIS] AT LYS-256</scope>
    <scope>IDENTIFICATION BY MASS SPECTROMETRY [LARGE SCALE ANALYSIS]</scope>
    <source>
        <tissue>Liver</tissue>
    </source>
</reference>
<name>DPYS_MOUSE</name>
<gene>
    <name type="primary">Dpys</name>
</gene>
<dbReference type="EC" id="3.5.2.2" evidence="3"/>
<dbReference type="EMBL" id="AF249296">
    <property type="protein sequence ID" value="AAG37999.1"/>
    <property type="molecule type" value="mRNA"/>
</dbReference>
<dbReference type="EMBL" id="AF227731">
    <property type="protein sequence ID" value="AAK00644.1"/>
    <property type="molecule type" value="mRNA"/>
</dbReference>
<dbReference type="EMBL" id="AK004822">
    <property type="protein sequence ID" value="BAB23593.1"/>
    <property type="molecule type" value="mRNA"/>
</dbReference>
<dbReference type="EMBL" id="AK004899">
    <property type="protein sequence ID" value="BAB23654.1"/>
    <property type="molecule type" value="mRNA"/>
</dbReference>
<dbReference type="EMBL" id="BC037086">
    <property type="protein sequence ID" value="AAH37086.1"/>
    <property type="molecule type" value="mRNA"/>
</dbReference>
<dbReference type="CCDS" id="CCDS27445.1"/>
<dbReference type="RefSeq" id="NP_001157938.1">
    <property type="nucleotide sequence ID" value="NM_001164466.1"/>
</dbReference>
<dbReference type="RefSeq" id="NP_073559.3">
    <property type="nucleotide sequence ID" value="NM_022722.3"/>
</dbReference>
<dbReference type="SMR" id="Q9EQF5"/>
<dbReference type="BioGRID" id="211101">
    <property type="interactions" value="3"/>
</dbReference>
<dbReference type="FunCoup" id="Q9EQF5">
    <property type="interactions" value="284"/>
</dbReference>
<dbReference type="STRING" id="10090.ENSMUSP00000022915"/>
<dbReference type="MEROPS" id="M38.973"/>
<dbReference type="GlyGen" id="Q9EQF5">
    <property type="glycosylation" value="3 sites, 1 O-linked glycan (3 sites)"/>
</dbReference>
<dbReference type="iPTMnet" id="Q9EQF5"/>
<dbReference type="PhosphoSitePlus" id="Q9EQF5"/>
<dbReference type="SwissPalm" id="Q9EQF5"/>
<dbReference type="jPOST" id="Q9EQF5"/>
<dbReference type="PaxDb" id="10090-ENSMUSP00000022915"/>
<dbReference type="PeptideAtlas" id="Q9EQF5"/>
<dbReference type="ProteomicsDB" id="277401"/>
<dbReference type="Antibodypedia" id="13364">
    <property type="antibodies" value="305 antibodies from 27 providers"/>
</dbReference>
<dbReference type="DNASU" id="64705"/>
<dbReference type="Ensembl" id="ENSMUST00000022915.11">
    <property type="protein sequence ID" value="ENSMUSP00000022915.4"/>
    <property type="gene ID" value="ENSMUSG00000022304.14"/>
</dbReference>
<dbReference type="Ensembl" id="ENSMUST00000110306.9">
    <property type="protein sequence ID" value="ENSMUSP00000105935.2"/>
    <property type="gene ID" value="ENSMUSG00000022304.14"/>
</dbReference>
<dbReference type="GeneID" id="64705"/>
<dbReference type="KEGG" id="mmu:64705"/>
<dbReference type="UCSC" id="uc007vok.2">
    <property type="organism name" value="mouse"/>
</dbReference>
<dbReference type="AGR" id="MGI:1928679"/>
<dbReference type="CTD" id="1807"/>
<dbReference type="MGI" id="MGI:1928679">
    <property type="gene designation" value="Dpys"/>
</dbReference>
<dbReference type="VEuPathDB" id="HostDB:ENSMUSG00000022304"/>
<dbReference type="eggNOG" id="KOG2584">
    <property type="taxonomic scope" value="Eukaryota"/>
</dbReference>
<dbReference type="GeneTree" id="ENSGT01030000234527"/>
<dbReference type="HOGENOM" id="CLU_015572_2_2_1"/>
<dbReference type="InParanoid" id="Q9EQF5"/>
<dbReference type="OMA" id="SAETHHM"/>
<dbReference type="OrthoDB" id="10258955at2759"/>
<dbReference type="PhylomeDB" id="Q9EQF5"/>
<dbReference type="TreeFam" id="TF314706"/>
<dbReference type="BRENDA" id="3.5.2.2">
    <property type="organism ID" value="3474"/>
</dbReference>
<dbReference type="Reactome" id="R-MMU-73621">
    <property type="pathway name" value="Pyrimidine catabolism"/>
</dbReference>
<dbReference type="BioGRID-ORCS" id="64705">
    <property type="hits" value="1 hit in 77 CRISPR screens"/>
</dbReference>
<dbReference type="ChiTaRS" id="Dpys">
    <property type="organism name" value="mouse"/>
</dbReference>
<dbReference type="PRO" id="PR:Q9EQF5"/>
<dbReference type="Proteomes" id="UP000000589">
    <property type="component" value="Chromosome 15"/>
</dbReference>
<dbReference type="RNAct" id="Q9EQF5">
    <property type="molecule type" value="protein"/>
</dbReference>
<dbReference type="Bgee" id="ENSMUSG00000022304">
    <property type="expression patterns" value="Expressed in left lobe of liver and 42 other cell types or tissues"/>
</dbReference>
<dbReference type="ExpressionAtlas" id="Q9EQF5">
    <property type="expression patterns" value="baseline and differential"/>
</dbReference>
<dbReference type="GO" id="GO:0005829">
    <property type="term" value="C:cytosol"/>
    <property type="evidence" value="ECO:0000314"/>
    <property type="project" value="MGI"/>
</dbReference>
<dbReference type="GO" id="GO:0016597">
    <property type="term" value="F:amino acid binding"/>
    <property type="evidence" value="ECO:0000250"/>
    <property type="project" value="BHF-UCL"/>
</dbReference>
<dbReference type="GO" id="GO:0004157">
    <property type="term" value="F:dihydropyrimidinase activity"/>
    <property type="evidence" value="ECO:0000314"/>
    <property type="project" value="MGI"/>
</dbReference>
<dbReference type="GO" id="GO:0051219">
    <property type="term" value="F:phosphoprotein binding"/>
    <property type="evidence" value="ECO:0000353"/>
    <property type="project" value="BHF-UCL"/>
</dbReference>
<dbReference type="GO" id="GO:0002059">
    <property type="term" value="F:thymine binding"/>
    <property type="evidence" value="ECO:0000250"/>
    <property type="project" value="BHF-UCL"/>
</dbReference>
<dbReference type="GO" id="GO:0002058">
    <property type="term" value="F:uracil binding"/>
    <property type="evidence" value="ECO:0000250"/>
    <property type="project" value="BHF-UCL"/>
</dbReference>
<dbReference type="GO" id="GO:0008270">
    <property type="term" value="F:zinc ion binding"/>
    <property type="evidence" value="ECO:0000250"/>
    <property type="project" value="BHF-UCL"/>
</dbReference>
<dbReference type="GO" id="GO:0019482">
    <property type="term" value="P:beta-alanine metabolic process"/>
    <property type="evidence" value="ECO:0000250"/>
    <property type="project" value="BHF-UCL"/>
</dbReference>
<dbReference type="GO" id="GO:0006248">
    <property type="term" value="P:CMP catabolic process"/>
    <property type="evidence" value="ECO:0000314"/>
    <property type="project" value="MGI"/>
</dbReference>
<dbReference type="GO" id="GO:0006249">
    <property type="term" value="P:dCMP catabolic process"/>
    <property type="evidence" value="ECO:0000314"/>
    <property type="project" value="MGI"/>
</dbReference>
<dbReference type="GO" id="GO:0046074">
    <property type="term" value="P:dTMP catabolic process"/>
    <property type="evidence" value="ECO:0000266"/>
    <property type="project" value="MGI"/>
</dbReference>
<dbReference type="GO" id="GO:0046079">
    <property type="term" value="P:dUMP catabolic process"/>
    <property type="evidence" value="ECO:0000314"/>
    <property type="project" value="MGI"/>
</dbReference>
<dbReference type="GO" id="GO:0006210">
    <property type="term" value="P:thymine catabolic process"/>
    <property type="evidence" value="ECO:0000250"/>
    <property type="project" value="BHF-UCL"/>
</dbReference>
<dbReference type="GO" id="GO:0046050">
    <property type="term" value="P:UMP catabolic process"/>
    <property type="evidence" value="ECO:0000314"/>
    <property type="project" value="MGI"/>
</dbReference>
<dbReference type="GO" id="GO:0006212">
    <property type="term" value="P:uracil catabolic process"/>
    <property type="evidence" value="ECO:0000250"/>
    <property type="project" value="BHF-UCL"/>
</dbReference>
<dbReference type="CDD" id="cd01314">
    <property type="entry name" value="D-HYD"/>
    <property type="match status" value="1"/>
</dbReference>
<dbReference type="FunFam" id="3.20.20.140:FF:000076">
    <property type="entry name" value="Dihydropyrimidinase like 2"/>
    <property type="match status" value="1"/>
</dbReference>
<dbReference type="Gene3D" id="3.20.20.140">
    <property type="entry name" value="Metal-dependent hydrolases"/>
    <property type="match status" value="1"/>
</dbReference>
<dbReference type="Gene3D" id="2.30.40.10">
    <property type="entry name" value="Urease, subunit C, domain 1"/>
    <property type="match status" value="1"/>
</dbReference>
<dbReference type="InterPro" id="IPR006680">
    <property type="entry name" value="Amidohydro-rel"/>
</dbReference>
<dbReference type="InterPro" id="IPR011778">
    <property type="entry name" value="Hydantoinase/dihydroPyrase"/>
</dbReference>
<dbReference type="InterPro" id="IPR011059">
    <property type="entry name" value="Metal-dep_hydrolase_composite"/>
</dbReference>
<dbReference type="InterPro" id="IPR032466">
    <property type="entry name" value="Metal_Hydrolase"/>
</dbReference>
<dbReference type="InterPro" id="IPR050378">
    <property type="entry name" value="Metallo-dep_Hydrolases_sf"/>
</dbReference>
<dbReference type="NCBIfam" id="TIGR02033">
    <property type="entry name" value="D-hydantoinase"/>
    <property type="match status" value="1"/>
</dbReference>
<dbReference type="PANTHER" id="PTHR11647:SF50">
    <property type="entry name" value="DIHYDROPYRIMIDINASE"/>
    <property type="match status" value="1"/>
</dbReference>
<dbReference type="PANTHER" id="PTHR11647">
    <property type="entry name" value="HYDRANTOINASE/DIHYDROPYRIMIDINASE FAMILY MEMBER"/>
    <property type="match status" value="1"/>
</dbReference>
<dbReference type="Pfam" id="PF01979">
    <property type="entry name" value="Amidohydro_1"/>
    <property type="match status" value="1"/>
</dbReference>
<dbReference type="SUPFAM" id="SSF51338">
    <property type="entry name" value="Composite domain of metallo-dependent hydrolases"/>
    <property type="match status" value="2"/>
</dbReference>
<dbReference type="SUPFAM" id="SSF51556">
    <property type="entry name" value="Metallo-dependent hydrolases"/>
    <property type="match status" value="1"/>
</dbReference>
<keyword id="KW-0378">Hydrolase</keyword>
<keyword id="KW-0479">Metal-binding</keyword>
<keyword id="KW-0597">Phosphoprotein</keyword>
<keyword id="KW-1185">Reference proteome</keyword>
<keyword id="KW-0862">Zinc</keyword>
<organism>
    <name type="scientific">Mus musculus</name>
    <name type="common">Mouse</name>
    <dbReference type="NCBI Taxonomy" id="10090"/>
    <lineage>
        <taxon>Eukaryota</taxon>
        <taxon>Metazoa</taxon>
        <taxon>Chordata</taxon>
        <taxon>Craniata</taxon>
        <taxon>Vertebrata</taxon>
        <taxon>Euteleostomi</taxon>
        <taxon>Mammalia</taxon>
        <taxon>Eutheria</taxon>
        <taxon>Euarchontoglires</taxon>
        <taxon>Glires</taxon>
        <taxon>Rodentia</taxon>
        <taxon>Myomorpha</taxon>
        <taxon>Muroidea</taxon>
        <taxon>Muridae</taxon>
        <taxon>Murinae</taxon>
        <taxon>Mus</taxon>
        <taxon>Mus</taxon>
    </lineage>
</organism>